<sequence>MKVRASVKKICDKCKVIHREGVVRVICTNPKHKQRQG</sequence>
<accession>Q01WB6</accession>
<name>RL36_SOLUE</name>
<reference key="1">
    <citation type="journal article" date="2009" name="Appl. Environ. Microbiol.">
        <title>Three genomes from the phylum Acidobacteria provide insight into the lifestyles of these microorganisms in soils.</title>
        <authorList>
            <person name="Ward N.L."/>
            <person name="Challacombe J.F."/>
            <person name="Janssen P.H."/>
            <person name="Henrissat B."/>
            <person name="Coutinho P.M."/>
            <person name="Wu M."/>
            <person name="Xie G."/>
            <person name="Haft D.H."/>
            <person name="Sait M."/>
            <person name="Badger J."/>
            <person name="Barabote R.D."/>
            <person name="Bradley B."/>
            <person name="Brettin T.S."/>
            <person name="Brinkac L.M."/>
            <person name="Bruce D."/>
            <person name="Creasy T."/>
            <person name="Daugherty S.C."/>
            <person name="Davidsen T.M."/>
            <person name="DeBoy R.T."/>
            <person name="Detter J.C."/>
            <person name="Dodson R.J."/>
            <person name="Durkin A.S."/>
            <person name="Ganapathy A."/>
            <person name="Gwinn-Giglio M."/>
            <person name="Han C.S."/>
            <person name="Khouri H."/>
            <person name="Kiss H."/>
            <person name="Kothari S.P."/>
            <person name="Madupu R."/>
            <person name="Nelson K.E."/>
            <person name="Nelson W.C."/>
            <person name="Paulsen I."/>
            <person name="Penn K."/>
            <person name="Ren Q."/>
            <person name="Rosovitz M.J."/>
            <person name="Selengut J.D."/>
            <person name="Shrivastava S."/>
            <person name="Sullivan S.A."/>
            <person name="Tapia R."/>
            <person name="Thompson L.S."/>
            <person name="Watkins K.L."/>
            <person name="Yang Q."/>
            <person name="Yu C."/>
            <person name="Zafar N."/>
            <person name="Zhou L."/>
            <person name="Kuske C.R."/>
        </authorList>
    </citation>
    <scope>NUCLEOTIDE SEQUENCE [LARGE SCALE GENOMIC DNA]</scope>
    <source>
        <strain>Ellin6076</strain>
    </source>
</reference>
<keyword id="KW-0687">Ribonucleoprotein</keyword>
<keyword id="KW-0689">Ribosomal protein</keyword>
<evidence type="ECO:0000255" key="1">
    <source>
        <dbReference type="HAMAP-Rule" id="MF_00251"/>
    </source>
</evidence>
<evidence type="ECO:0000305" key="2"/>
<dbReference type="EMBL" id="CP000473">
    <property type="protein sequence ID" value="ABJ86049.1"/>
    <property type="molecule type" value="Genomic_DNA"/>
</dbReference>
<dbReference type="SMR" id="Q01WB6"/>
<dbReference type="FunCoup" id="Q01WB6">
    <property type="interactions" value="235"/>
</dbReference>
<dbReference type="STRING" id="234267.Acid_5094"/>
<dbReference type="KEGG" id="sus:Acid_5094"/>
<dbReference type="eggNOG" id="COG0257">
    <property type="taxonomic scope" value="Bacteria"/>
</dbReference>
<dbReference type="HOGENOM" id="CLU_135723_6_2_0"/>
<dbReference type="InParanoid" id="Q01WB6"/>
<dbReference type="OrthoDB" id="9802520at2"/>
<dbReference type="GO" id="GO:0005737">
    <property type="term" value="C:cytoplasm"/>
    <property type="evidence" value="ECO:0007669"/>
    <property type="project" value="UniProtKB-ARBA"/>
</dbReference>
<dbReference type="GO" id="GO:1990904">
    <property type="term" value="C:ribonucleoprotein complex"/>
    <property type="evidence" value="ECO:0007669"/>
    <property type="project" value="UniProtKB-KW"/>
</dbReference>
<dbReference type="GO" id="GO:0005840">
    <property type="term" value="C:ribosome"/>
    <property type="evidence" value="ECO:0007669"/>
    <property type="project" value="UniProtKB-KW"/>
</dbReference>
<dbReference type="GO" id="GO:0003735">
    <property type="term" value="F:structural constituent of ribosome"/>
    <property type="evidence" value="ECO:0007669"/>
    <property type="project" value="InterPro"/>
</dbReference>
<dbReference type="GO" id="GO:0006412">
    <property type="term" value="P:translation"/>
    <property type="evidence" value="ECO:0007669"/>
    <property type="project" value="UniProtKB-UniRule"/>
</dbReference>
<dbReference type="HAMAP" id="MF_00251">
    <property type="entry name" value="Ribosomal_bL36"/>
    <property type="match status" value="1"/>
</dbReference>
<dbReference type="InterPro" id="IPR000473">
    <property type="entry name" value="Ribosomal_bL36"/>
</dbReference>
<dbReference type="InterPro" id="IPR035977">
    <property type="entry name" value="Ribosomal_bL36_sp"/>
</dbReference>
<dbReference type="NCBIfam" id="TIGR01022">
    <property type="entry name" value="rpmJ_bact"/>
    <property type="match status" value="1"/>
</dbReference>
<dbReference type="PANTHER" id="PTHR42888">
    <property type="entry name" value="50S RIBOSOMAL PROTEIN L36, CHLOROPLASTIC"/>
    <property type="match status" value="1"/>
</dbReference>
<dbReference type="PANTHER" id="PTHR42888:SF1">
    <property type="entry name" value="LARGE RIBOSOMAL SUBUNIT PROTEIN BL36C"/>
    <property type="match status" value="1"/>
</dbReference>
<dbReference type="Pfam" id="PF00444">
    <property type="entry name" value="Ribosomal_L36"/>
    <property type="match status" value="1"/>
</dbReference>
<dbReference type="SUPFAM" id="SSF57840">
    <property type="entry name" value="Ribosomal protein L36"/>
    <property type="match status" value="1"/>
</dbReference>
<dbReference type="PROSITE" id="PS00828">
    <property type="entry name" value="RIBOSOMAL_L36"/>
    <property type="match status" value="1"/>
</dbReference>
<feature type="chain" id="PRO_0000302301" description="Large ribosomal subunit protein bL36">
    <location>
        <begin position="1"/>
        <end position="37"/>
    </location>
</feature>
<comment type="similarity">
    <text evidence="1">Belongs to the bacterial ribosomal protein bL36 family.</text>
</comment>
<proteinExistence type="inferred from homology"/>
<organism>
    <name type="scientific">Solibacter usitatus (strain Ellin6076)</name>
    <dbReference type="NCBI Taxonomy" id="234267"/>
    <lineage>
        <taxon>Bacteria</taxon>
        <taxon>Pseudomonadati</taxon>
        <taxon>Acidobacteriota</taxon>
        <taxon>Terriglobia</taxon>
        <taxon>Bryobacterales</taxon>
        <taxon>Solibacteraceae</taxon>
        <taxon>Candidatus Solibacter</taxon>
    </lineage>
</organism>
<gene>
    <name evidence="1" type="primary">rpmJ</name>
    <name type="ordered locus">Acid_5094</name>
</gene>
<protein>
    <recommendedName>
        <fullName evidence="1">Large ribosomal subunit protein bL36</fullName>
    </recommendedName>
    <alternativeName>
        <fullName evidence="2">50S ribosomal protein L36</fullName>
    </alternativeName>
</protein>